<keyword id="KW-1017">Isopeptide bond</keyword>
<keyword id="KW-1185">Reference proteome</keyword>
<keyword id="KW-0833">Ubl conjugation pathway</keyword>
<organism>
    <name type="scientific">Bifidobacterium dentium (strain ATCC 27534 / DSM 20436 / JCM 1195 / Bd1)</name>
    <dbReference type="NCBI Taxonomy" id="401473"/>
    <lineage>
        <taxon>Bacteria</taxon>
        <taxon>Bacillati</taxon>
        <taxon>Actinomycetota</taxon>
        <taxon>Actinomycetes</taxon>
        <taxon>Bifidobacteriales</taxon>
        <taxon>Bifidobacteriaceae</taxon>
        <taxon>Bifidobacterium</taxon>
    </lineage>
</organism>
<evidence type="ECO:0000255" key="1">
    <source>
        <dbReference type="HAMAP-Rule" id="MF_02106"/>
    </source>
</evidence>
<evidence type="ECO:0000256" key="2">
    <source>
        <dbReference type="SAM" id="MobiDB-lite"/>
    </source>
</evidence>
<accession>D2Q9C9</accession>
<name>PUP_BIFDB</name>
<comment type="function">
    <text evidence="1">Protein modifier that is covalently attached to lysine residues of substrate proteins, thereby targeting them for proteasomal degradation. The tagging system is termed pupylation.</text>
</comment>
<comment type="pathway">
    <text evidence="1">Protein degradation; proteasomal Pup-dependent pathway.</text>
</comment>
<comment type="subunit">
    <text evidence="1">Strongly interacts with the proteasome-associated ATPase ARC through a hydrophobic interface; the interacting region of Pup lies in its C-terminal half. There is one Pup binding site per ARC hexamer ring.</text>
</comment>
<comment type="domain">
    <text evidence="1">The N-terminal unstructured half of Pup provides a signal required to initiate unfolding and degradation by the proteasome but is not needed for pupylation, while the C-terminal helical half of Pup interacts with ARC to target proteins to the proteasome.</text>
</comment>
<comment type="similarity">
    <text evidence="1">Belongs to the prokaryotic ubiquitin-like protein family.</text>
</comment>
<reference key="1">
    <citation type="journal article" date="2009" name="PLoS Genet.">
        <title>The Bifidobacterium dentium Bd1 genome sequence reflects its genetic adaptation to the human oral cavity.</title>
        <authorList>
            <person name="Ventura M."/>
            <person name="Turroni F."/>
            <person name="Zomer A."/>
            <person name="Foroni E."/>
            <person name="Giubellini V."/>
            <person name="Bottacini F."/>
            <person name="Canchaya C."/>
            <person name="Claesson M.J."/>
            <person name="He F."/>
            <person name="Mantzourani M."/>
            <person name="Mulas L."/>
            <person name="Ferrarini A."/>
            <person name="Gao B."/>
            <person name="Delledonne M."/>
            <person name="Henrissat B."/>
            <person name="Coutinho P."/>
            <person name="Oggioni M."/>
            <person name="Gupta R.S."/>
            <person name="Zhang Z."/>
            <person name="Beighton D."/>
            <person name="Fitzgerald G.F."/>
            <person name="O'Toole P.W."/>
            <person name="van Sinderen D."/>
        </authorList>
    </citation>
    <scope>NUCLEOTIDE SEQUENCE [LARGE SCALE GENOMIC DNA]</scope>
    <source>
        <strain>ATCC 27534 / DSM 20436 / JCM 1195 / Bd1</strain>
    </source>
</reference>
<proteinExistence type="inferred from homology"/>
<gene>
    <name evidence="1" type="primary">pup</name>
    <name type="ordered locus">BDP_0754</name>
</gene>
<protein>
    <recommendedName>
        <fullName evidence="1">Prokaryotic ubiquitin-like protein Pup</fullName>
    </recommendedName>
    <alternativeName>
        <fullName evidence="1">Bacterial ubiquitin-like modifier</fullName>
    </alternativeName>
</protein>
<feature type="chain" id="PRO_0000395996" description="Prokaryotic ubiquitin-like protein Pup">
    <location>
        <begin position="1"/>
        <end position="63"/>
    </location>
</feature>
<feature type="region of interest" description="Disordered" evidence="2">
    <location>
        <begin position="1"/>
        <end position="28"/>
    </location>
</feature>
<feature type="region of interest" description="ARC ATPase binding" evidence="1">
    <location>
        <begin position="19"/>
        <end position="57"/>
    </location>
</feature>
<feature type="cross-link" description="Isoglutamyl lysine isopeptide (Glu-Lys) (interchain with K-? in acceptor proteins)" evidence="1">
    <location>
        <position position="63"/>
    </location>
</feature>
<sequence length="63" mass="6786">MPQEFEQIRSADQPLDSEESAPVAGARTDDTVDALDAVLDDIESVLETNAEEYVGSFVQKGGE</sequence>
<dbReference type="EMBL" id="CP001750">
    <property type="protein sequence ID" value="ADB09415.1"/>
    <property type="molecule type" value="Genomic_DNA"/>
</dbReference>
<dbReference type="RefSeq" id="WP_012902012.1">
    <property type="nucleotide sequence ID" value="NC_013714.1"/>
</dbReference>
<dbReference type="SMR" id="D2Q9C9"/>
<dbReference type="STRING" id="401473.BDP_0754"/>
<dbReference type="KEGG" id="bde:BDP_0754"/>
<dbReference type="eggNOG" id="ENOG5031YAF">
    <property type="taxonomic scope" value="Bacteria"/>
</dbReference>
<dbReference type="HOGENOM" id="CLU_183816_0_0_11"/>
<dbReference type="UniPathway" id="UPA00997"/>
<dbReference type="Proteomes" id="UP000008693">
    <property type="component" value="Chromosome"/>
</dbReference>
<dbReference type="GO" id="GO:0070628">
    <property type="term" value="F:proteasome binding"/>
    <property type="evidence" value="ECO:0007669"/>
    <property type="project" value="UniProtKB-UniRule"/>
</dbReference>
<dbReference type="GO" id="GO:0031386">
    <property type="term" value="F:protein tag activity"/>
    <property type="evidence" value="ECO:0007669"/>
    <property type="project" value="UniProtKB-UniRule"/>
</dbReference>
<dbReference type="GO" id="GO:0019941">
    <property type="term" value="P:modification-dependent protein catabolic process"/>
    <property type="evidence" value="ECO:0007669"/>
    <property type="project" value="UniProtKB-UniRule"/>
</dbReference>
<dbReference type="GO" id="GO:0010498">
    <property type="term" value="P:proteasomal protein catabolic process"/>
    <property type="evidence" value="ECO:0007669"/>
    <property type="project" value="UniProtKB-UniRule"/>
</dbReference>
<dbReference type="GO" id="GO:0070490">
    <property type="term" value="P:protein pupylation"/>
    <property type="evidence" value="ECO:0007669"/>
    <property type="project" value="UniProtKB-UniRule"/>
</dbReference>
<dbReference type="HAMAP" id="MF_02106">
    <property type="entry name" value="Pup"/>
    <property type="match status" value="1"/>
</dbReference>
<dbReference type="InterPro" id="IPR008515">
    <property type="entry name" value="Ubiquitin-like_Pup"/>
</dbReference>
<dbReference type="NCBIfam" id="TIGR03687">
    <property type="entry name" value="pupylate_cterm"/>
    <property type="match status" value="1"/>
</dbReference>
<dbReference type="Pfam" id="PF05639">
    <property type="entry name" value="Pup"/>
    <property type="match status" value="1"/>
</dbReference>